<sequence length="865" mass="96334">MRFDKLTTKFQQALADAQSLAARNDHPYIEPVHVLAALLGDPDSGAASLLARAGVAVNRVQPAIDSALKGLPQVQGDDNVQVGRELQSVLVRTDKEAARRGDTYIASELFLLALADDKGDAGRILREAGLQKKALEAAIDAVRGGENVSGAEGESNREALSKYTLDLTERARQGKLDPVIGRDDEIRRTIQILQRRTKNNPVLIGEPGVGKTAIVEGLAQRIVNDEVPETLRGKRVLSLDLAALLAGAKFRGEFEERLKAVLKELAQDDGQNIVFIDELHTMAGAGKAEGAMDAGNMLKPALARGELHCIGATTLDEYRKYIEKDAALERRFQKVLVGEPDVESTIAILRGLQERYELHHGVEITDPAIVAAAELSHRYITDRFLPDKAIDLIDEAGARIRMEIDSKPEVMDRLDRRIIQLKIEREAVKKETDDASMRRLAVIEEELEKLQREYNDYEEIWKAEKAAVQGTQAIKEEIDRVRAEMAELQRKGQFDKLAELQYGKLPELEARLKAADSAEREAGESDSGKPRLLRTQVGAEEIAEVVSRATGIPVAKMMQGERDKLLRMEDFLHKRVVGQDEAVRLVSDAIRRSRAGLADPSRPYGSFLFLGPTGVGKTELTRALADFLFDSEEHMIRIDMSEFMEKHSVARLIGAPPGYVGYEEGGYLTEAVRRKPYSVILLDEVEKAHPDVFNVLLQVLDDGRLTDGQGRTVDFRNTVIVMTSNLGSQHIQSMAGKPYEVIKEVVWDELKHTFRPEFLNRIDEVVVFHGLEAQHIESIARIQLKRLGERLEKQEMRLDVSDAALAEIARSGFDPVFGARPLKRAIQQQIENPVAKLILEGVFGPRDVVPVDWQDGKFVFTRTLQ</sequence>
<comment type="function">
    <text evidence="1">Part of a stress-induced multi-chaperone system, it is involved in the recovery of the cell from heat-induced damage, in cooperation with DnaK, DnaJ and GrpE. Acts before DnaK, in the processing of protein aggregates. Protein binding stimulates the ATPase activity; ATP hydrolysis unfolds the denatured protein aggregates, which probably helps expose new hydrophobic binding sites on the surface of ClpB-bound aggregates, contributing to the solubilization and refolding of denatured protein aggregates by DnaK (By similarity).</text>
</comment>
<comment type="subunit">
    <text evidence="1">Homohexamer. The oligomerization is ATP-dependent (By similarity).</text>
</comment>
<comment type="subcellular location">
    <subcellularLocation>
        <location evidence="3">Cytoplasm</location>
    </subcellularLocation>
</comment>
<comment type="domain">
    <text evidence="1">The Clp repeat (R) domain probably functions as a substrate-discriminating domain, recruiting aggregated proteins to the ClpB hexamer and/or stabilizing bound proteins. The NBD2 domain is responsible for oligomerization, whereas the NBD1 domain stabilizes the hexamer probably in an ATP-dependent manner. The movement of the coiled-coil domain is essential for ClpB ability to rescue proteins from an aggregated state, probably by pulling apart large aggregated proteins, which are bound between the coiled-coils motifs of adjacent ClpB subunits in the functional hexamer (By similarity).</text>
</comment>
<comment type="similarity">
    <text evidence="3">Belongs to the ClpA/ClpB family.</text>
</comment>
<name>CLPB_BORPE</name>
<feature type="chain" id="PRO_0000191097" description="Chaperone protein ClpB">
    <location>
        <begin position="1"/>
        <end position="865"/>
    </location>
</feature>
<feature type="domain" description="Clp R" evidence="2">
    <location>
        <begin position="3"/>
        <end position="145"/>
    </location>
</feature>
<feature type="region of interest" description="Repeat 1" evidence="2">
    <location>
        <begin position="6"/>
        <end position="71"/>
    </location>
</feature>
<feature type="region of interest" description="Repeat 2" evidence="2">
    <location>
        <begin position="82"/>
        <end position="145"/>
    </location>
</feature>
<feature type="region of interest" description="NBD1" evidence="1">
    <location>
        <begin position="158"/>
        <end position="339"/>
    </location>
</feature>
<feature type="region of interest" description="Linker" evidence="1">
    <location>
        <begin position="340"/>
        <end position="551"/>
    </location>
</feature>
<feature type="region of interest" description="NBD2" evidence="1">
    <location>
        <begin position="561"/>
        <end position="770"/>
    </location>
</feature>
<feature type="region of interest" description="C-terminal" evidence="1">
    <location>
        <begin position="771"/>
        <end position="865"/>
    </location>
</feature>
<feature type="coiled-coil region" evidence="1">
    <location>
        <begin position="390"/>
        <end position="524"/>
    </location>
</feature>
<feature type="binding site" evidence="1">
    <location>
        <begin position="205"/>
        <end position="212"/>
    </location>
    <ligand>
        <name>ATP</name>
        <dbReference type="ChEBI" id="CHEBI:30616"/>
        <label>1</label>
    </ligand>
</feature>
<feature type="binding site" evidence="1">
    <location>
        <begin position="611"/>
        <end position="618"/>
    </location>
    <ligand>
        <name>ATP</name>
        <dbReference type="ChEBI" id="CHEBI:30616"/>
        <label>2</label>
    </ligand>
</feature>
<evidence type="ECO:0000250" key="1"/>
<evidence type="ECO:0000255" key="2">
    <source>
        <dbReference type="PROSITE-ProRule" id="PRU01251"/>
    </source>
</evidence>
<evidence type="ECO:0000305" key="3"/>
<protein>
    <recommendedName>
        <fullName>Chaperone protein ClpB</fullName>
    </recommendedName>
</protein>
<keyword id="KW-0067">ATP-binding</keyword>
<keyword id="KW-0143">Chaperone</keyword>
<keyword id="KW-0175">Coiled coil</keyword>
<keyword id="KW-0963">Cytoplasm</keyword>
<keyword id="KW-0547">Nucleotide-binding</keyword>
<keyword id="KW-1185">Reference proteome</keyword>
<keyword id="KW-0677">Repeat</keyword>
<keyword id="KW-0346">Stress response</keyword>
<gene>
    <name type="primary">clpB</name>
    <name type="ordered locus">BP1198</name>
</gene>
<accession>Q7VYV6</accession>
<proteinExistence type="inferred from homology"/>
<dbReference type="EMBL" id="BX640414">
    <property type="protein sequence ID" value="CAE41494.1"/>
    <property type="molecule type" value="Genomic_DNA"/>
</dbReference>
<dbReference type="RefSeq" id="NP_879972.1">
    <property type="nucleotide sequence ID" value="NC_002929.2"/>
</dbReference>
<dbReference type="RefSeq" id="WP_010930242.1">
    <property type="nucleotide sequence ID" value="NZ_CP039022.1"/>
</dbReference>
<dbReference type="SMR" id="Q7VYV6"/>
<dbReference type="STRING" id="257313.BP1198"/>
<dbReference type="PaxDb" id="257313-BP1198"/>
<dbReference type="GeneID" id="69601111"/>
<dbReference type="KEGG" id="bpe:BP1198"/>
<dbReference type="PATRIC" id="fig|257313.5.peg.1290"/>
<dbReference type="eggNOG" id="COG0542">
    <property type="taxonomic scope" value="Bacteria"/>
</dbReference>
<dbReference type="HOGENOM" id="CLU_005070_4_0_4"/>
<dbReference type="Proteomes" id="UP000002676">
    <property type="component" value="Chromosome"/>
</dbReference>
<dbReference type="GO" id="GO:0005737">
    <property type="term" value="C:cytoplasm"/>
    <property type="evidence" value="ECO:0007669"/>
    <property type="project" value="UniProtKB-SubCell"/>
</dbReference>
<dbReference type="GO" id="GO:0005524">
    <property type="term" value="F:ATP binding"/>
    <property type="evidence" value="ECO:0007669"/>
    <property type="project" value="UniProtKB-KW"/>
</dbReference>
<dbReference type="GO" id="GO:0016887">
    <property type="term" value="F:ATP hydrolysis activity"/>
    <property type="evidence" value="ECO:0007669"/>
    <property type="project" value="InterPro"/>
</dbReference>
<dbReference type="GO" id="GO:0034605">
    <property type="term" value="P:cellular response to heat"/>
    <property type="evidence" value="ECO:0007669"/>
    <property type="project" value="TreeGrafter"/>
</dbReference>
<dbReference type="GO" id="GO:0042026">
    <property type="term" value="P:protein refolding"/>
    <property type="evidence" value="ECO:0007669"/>
    <property type="project" value="InterPro"/>
</dbReference>
<dbReference type="CDD" id="cd00009">
    <property type="entry name" value="AAA"/>
    <property type="match status" value="1"/>
</dbReference>
<dbReference type="CDD" id="cd19499">
    <property type="entry name" value="RecA-like_ClpB_Hsp104-like"/>
    <property type="match status" value="1"/>
</dbReference>
<dbReference type="FunFam" id="1.10.8.60:FF:000017">
    <property type="entry name" value="ATP-dependent chaperone ClpB"/>
    <property type="match status" value="1"/>
</dbReference>
<dbReference type="FunFam" id="3.40.50.300:FF:000120">
    <property type="entry name" value="ATP-dependent chaperone ClpB"/>
    <property type="match status" value="1"/>
</dbReference>
<dbReference type="FunFam" id="3.40.50.300:FF:000025">
    <property type="entry name" value="ATP-dependent Clp protease subunit"/>
    <property type="match status" value="1"/>
</dbReference>
<dbReference type="FunFam" id="3.40.50.300:FF:000010">
    <property type="entry name" value="Chaperone clpB 1, putative"/>
    <property type="match status" value="1"/>
</dbReference>
<dbReference type="Gene3D" id="1.10.8.60">
    <property type="match status" value="1"/>
</dbReference>
<dbReference type="Gene3D" id="1.10.1780.10">
    <property type="entry name" value="Clp, N-terminal domain"/>
    <property type="match status" value="1"/>
</dbReference>
<dbReference type="Gene3D" id="3.40.50.300">
    <property type="entry name" value="P-loop containing nucleotide triphosphate hydrolases"/>
    <property type="match status" value="3"/>
</dbReference>
<dbReference type="InterPro" id="IPR003593">
    <property type="entry name" value="AAA+_ATPase"/>
</dbReference>
<dbReference type="InterPro" id="IPR003959">
    <property type="entry name" value="ATPase_AAA_core"/>
</dbReference>
<dbReference type="InterPro" id="IPR017730">
    <property type="entry name" value="Chaperonin_ClpB"/>
</dbReference>
<dbReference type="InterPro" id="IPR019489">
    <property type="entry name" value="Clp_ATPase_C"/>
</dbReference>
<dbReference type="InterPro" id="IPR036628">
    <property type="entry name" value="Clp_N_dom_sf"/>
</dbReference>
<dbReference type="InterPro" id="IPR004176">
    <property type="entry name" value="Clp_R_dom"/>
</dbReference>
<dbReference type="InterPro" id="IPR001270">
    <property type="entry name" value="ClpA/B"/>
</dbReference>
<dbReference type="InterPro" id="IPR018368">
    <property type="entry name" value="ClpA/B_CS1"/>
</dbReference>
<dbReference type="InterPro" id="IPR028299">
    <property type="entry name" value="ClpA/B_CS2"/>
</dbReference>
<dbReference type="InterPro" id="IPR041546">
    <property type="entry name" value="ClpA/ClpB_AAA_lid"/>
</dbReference>
<dbReference type="InterPro" id="IPR050130">
    <property type="entry name" value="ClpA_ClpB"/>
</dbReference>
<dbReference type="InterPro" id="IPR027417">
    <property type="entry name" value="P-loop_NTPase"/>
</dbReference>
<dbReference type="NCBIfam" id="TIGR03346">
    <property type="entry name" value="chaperone_ClpB"/>
    <property type="match status" value="1"/>
</dbReference>
<dbReference type="PANTHER" id="PTHR11638">
    <property type="entry name" value="ATP-DEPENDENT CLP PROTEASE"/>
    <property type="match status" value="1"/>
</dbReference>
<dbReference type="PANTHER" id="PTHR11638:SF18">
    <property type="entry name" value="HEAT SHOCK PROTEIN 104"/>
    <property type="match status" value="1"/>
</dbReference>
<dbReference type="Pfam" id="PF00004">
    <property type="entry name" value="AAA"/>
    <property type="match status" value="1"/>
</dbReference>
<dbReference type="Pfam" id="PF07724">
    <property type="entry name" value="AAA_2"/>
    <property type="match status" value="1"/>
</dbReference>
<dbReference type="Pfam" id="PF17871">
    <property type="entry name" value="AAA_lid_9"/>
    <property type="match status" value="1"/>
</dbReference>
<dbReference type="Pfam" id="PF02861">
    <property type="entry name" value="Clp_N"/>
    <property type="match status" value="2"/>
</dbReference>
<dbReference type="Pfam" id="PF10431">
    <property type="entry name" value="ClpB_D2-small"/>
    <property type="match status" value="1"/>
</dbReference>
<dbReference type="PRINTS" id="PR00300">
    <property type="entry name" value="CLPPROTEASEA"/>
</dbReference>
<dbReference type="SMART" id="SM00382">
    <property type="entry name" value="AAA"/>
    <property type="match status" value="2"/>
</dbReference>
<dbReference type="SMART" id="SM01086">
    <property type="entry name" value="ClpB_D2-small"/>
    <property type="match status" value="1"/>
</dbReference>
<dbReference type="SUPFAM" id="SSF81923">
    <property type="entry name" value="Double Clp-N motif"/>
    <property type="match status" value="1"/>
</dbReference>
<dbReference type="SUPFAM" id="SSF52540">
    <property type="entry name" value="P-loop containing nucleoside triphosphate hydrolases"/>
    <property type="match status" value="2"/>
</dbReference>
<dbReference type="PROSITE" id="PS51903">
    <property type="entry name" value="CLP_R"/>
    <property type="match status" value="1"/>
</dbReference>
<dbReference type="PROSITE" id="PS00870">
    <property type="entry name" value="CLPAB_1"/>
    <property type="match status" value="1"/>
</dbReference>
<dbReference type="PROSITE" id="PS00871">
    <property type="entry name" value="CLPAB_2"/>
    <property type="match status" value="1"/>
</dbReference>
<organism>
    <name type="scientific">Bordetella pertussis (strain Tohama I / ATCC BAA-589 / NCTC 13251)</name>
    <dbReference type="NCBI Taxonomy" id="257313"/>
    <lineage>
        <taxon>Bacteria</taxon>
        <taxon>Pseudomonadati</taxon>
        <taxon>Pseudomonadota</taxon>
        <taxon>Betaproteobacteria</taxon>
        <taxon>Burkholderiales</taxon>
        <taxon>Alcaligenaceae</taxon>
        <taxon>Bordetella</taxon>
    </lineage>
</organism>
<reference key="1">
    <citation type="journal article" date="2003" name="Nat. Genet.">
        <title>Comparative analysis of the genome sequences of Bordetella pertussis, Bordetella parapertussis and Bordetella bronchiseptica.</title>
        <authorList>
            <person name="Parkhill J."/>
            <person name="Sebaihia M."/>
            <person name="Preston A."/>
            <person name="Murphy L.D."/>
            <person name="Thomson N.R."/>
            <person name="Harris D.E."/>
            <person name="Holden M.T.G."/>
            <person name="Churcher C.M."/>
            <person name="Bentley S.D."/>
            <person name="Mungall K.L."/>
            <person name="Cerdeno-Tarraga A.-M."/>
            <person name="Temple L."/>
            <person name="James K.D."/>
            <person name="Harris B."/>
            <person name="Quail M.A."/>
            <person name="Achtman M."/>
            <person name="Atkin R."/>
            <person name="Baker S."/>
            <person name="Basham D."/>
            <person name="Bason N."/>
            <person name="Cherevach I."/>
            <person name="Chillingworth T."/>
            <person name="Collins M."/>
            <person name="Cronin A."/>
            <person name="Davis P."/>
            <person name="Doggett J."/>
            <person name="Feltwell T."/>
            <person name="Goble A."/>
            <person name="Hamlin N."/>
            <person name="Hauser H."/>
            <person name="Holroyd S."/>
            <person name="Jagels K."/>
            <person name="Leather S."/>
            <person name="Moule S."/>
            <person name="Norberczak H."/>
            <person name="O'Neil S."/>
            <person name="Ormond D."/>
            <person name="Price C."/>
            <person name="Rabbinowitsch E."/>
            <person name="Rutter S."/>
            <person name="Sanders M."/>
            <person name="Saunders D."/>
            <person name="Seeger K."/>
            <person name="Sharp S."/>
            <person name="Simmonds M."/>
            <person name="Skelton J."/>
            <person name="Squares R."/>
            <person name="Squares S."/>
            <person name="Stevens K."/>
            <person name="Unwin L."/>
            <person name="Whitehead S."/>
            <person name="Barrell B.G."/>
            <person name="Maskell D.J."/>
        </authorList>
    </citation>
    <scope>NUCLEOTIDE SEQUENCE [LARGE SCALE GENOMIC DNA]</scope>
    <source>
        <strain>Tohama I / ATCC BAA-589 / NCTC 13251</strain>
    </source>
</reference>